<gene>
    <name type="primary">Ptf1a</name>
    <name type="synonym">Ptf1p48</name>
</gene>
<evidence type="ECO:0000250" key="1"/>
<evidence type="ECO:0000255" key="2">
    <source>
        <dbReference type="PROSITE-ProRule" id="PRU00981"/>
    </source>
</evidence>
<evidence type="ECO:0000256" key="3">
    <source>
        <dbReference type="SAM" id="MobiDB-lite"/>
    </source>
</evidence>
<evidence type="ECO:0000269" key="4">
    <source>
    </source>
</evidence>
<evidence type="ECO:0000269" key="5">
    <source>
    </source>
</evidence>
<evidence type="ECO:0000269" key="6">
    <source>
    </source>
</evidence>
<organism>
    <name type="scientific">Rattus norvegicus</name>
    <name type="common">Rat</name>
    <dbReference type="NCBI Taxonomy" id="10116"/>
    <lineage>
        <taxon>Eukaryota</taxon>
        <taxon>Metazoa</taxon>
        <taxon>Chordata</taxon>
        <taxon>Craniata</taxon>
        <taxon>Vertebrata</taxon>
        <taxon>Euteleostomi</taxon>
        <taxon>Mammalia</taxon>
        <taxon>Eutheria</taxon>
        <taxon>Euarchontoglires</taxon>
        <taxon>Glires</taxon>
        <taxon>Rodentia</taxon>
        <taxon>Myomorpha</taxon>
        <taxon>Muroidea</taxon>
        <taxon>Muridae</taxon>
        <taxon>Murinae</taxon>
        <taxon>Rattus</taxon>
    </lineage>
</organism>
<comment type="function">
    <text evidence="4 5 6">Transcription factor implicated in the cell fate determination in various organs. Binds to the E-box consensus sequence 5'-CANNTG-3'. Plays a role in early and late pancreas development and differentiation. Important for determining whether cells allocated to the pancreatic buds continue towards pancreatic organogenesis or revert back to duodenal fates. May be involved in the maintenance of exocrine pancreas-specific gene expression including ELA1 and amylase. Required for the formation of pancreatic acinar and ductal cells. Plays an important role in cerebellar development. Directly regulated by FOXN4 and RORC during retinal development, FOXN4-PTF1A pathway plays a central role in directing the differentiation of retinal progenitors towards horizontal and amacrine fates.</text>
</comment>
<comment type="subunit">
    <text evidence="1">Component of the pancreas transcription factor 1 complex (PTF1) which is composed of TCF3/p75, TCF12/p64 and PTF1A/p48. TCF3 is responsible for the nuclear import of the p48/p64 complex. Interacts with TCF3 and RBPSUH/RBP-Jkappa (By similarity).</text>
</comment>
<comment type="subcellular location">
    <subcellularLocation>
        <location evidence="2 6">Nucleus</location>
    </subcellularLocation>
    <subcellularLocation>
        <location evidence="6">Cytoplasm</location>
    </subcellularLocation>
    <text>In the cytoplasm loses its ability to form the PTF1 complex.</text>
</comment>
<comment type="tissue specificity">
    <text evidence="4">Exocrine pancreas-specific. Expressed in azaserine-induced pancreatic tumors (at protein level). Expressed in AR42J cells but not in ARIP, DSL6A, or DSL6B cells. Down-regulation is associated with the change of an azaserine-induced acinar cell carcinoma to a ductal phenotype.</text>
</comment>
<comment type="developmental stage">
    <text evidence="6">Expressed from day 12 of gestation in pancreatic structures.</text>
</comment>
<dbReference type="EMBL" id="X98170">
    <property type="protein sequence ID" value="CAA66851.1"/>
    <property type="molecule type" value="mRNA"/>
</dbReference>
<dbReference type="EMBL" id="X98446">
    <property type="protein sequence ID" value="CAA67076.1"/>
    <property type="molecule type" value="Genomic_DNA"/>
</dbReference>
<dbReference type="PIR" id="S71755">
    <property type="entry name" value="S71755"/>
</dbReference>
<dbReference type="RefSeq" id="NP_446416.1">
    <property type="nucleotide sequence ID" value="NM_053964.2"/>
</dbReference>
<dbReference type="SMR" id="Q64305"/>
<dbReference type="BioGRID" id="250633">
    <property type="interactions" value="1"/>
</dbReference>
<dbReference type="CORUM" id="Q64305"/>
<dbReference type="FunCoup" id="Q64305">
    <property type="interactions" value="75"/>
</dbReference>
<dbReference type="STRING" id="10116.ENSRNOP00000022727"/>
<dbReference type="PhosphoSitePlus" id="Q64305"/>
<dbReference type="PaxDb" id="10116-ENSRNOP00000022727"/>
<dbReference type="Ensembl" id="ENSRNOT00000022727.3">
    <property type="protein sequence ID" value="ENSRNOP00000022727.1"/>
    <property type="gene ID" value="ENSRNOG00000016902.3"/>
</dbReference>
<dbReference type="GeneID" id="117034"/>
<dbReference type="KEGG" id="rno:117034"/>
<dbReference type="UCSC" id="RGD:621709">
    <property type="organism name" value="rat"/>
</dbReference>
<dbReference type="AGR" id="RGD:621709"/>
<dbReference type="CTD" id="256297"/>
<dbReference type="RGD" id="621709">
    <property type="gene designation" value="Ptf1a"/>
</dbReference>
<dbReference type="eggNOG" id="KOG4029">
    <property type="taxonomic scope" value="Eukaryota"/>
</dbReference>
<dbReference type="GeneTree" id="ENSGT00940000161000"/>
<dbReference type="HOGENOM" id="CLU_053709_0_0_1"/>
<dbReference type="InParanoid" id="Q64305"/>
<dbReference type="OMA" id="GYCCEAA"/>
<dbReference type="OrthoDB" id="10048995at2759"/>
<dbReference type="PhylomeDB" id="Q64305"/>
<dbReference type="TreeFam" id="TF315153"/>
<dbReference type="PRO" id="PR:Q64305"/>
<dbReference type="Proteomes" id="UP000002494">
    <property type="component" value="Chromosome 17"/>
</dbReference>
<dbReference type="Bgee" id="ENSRNOG00000016902">
    <property type="expression patterns" value="Expressed in pancreas and 1 other cell type or tissue"/>
</dbReference>
<dbReference type="GO" id="GO:0005737">
    <property type="term" value="C:cytoplasm"/>
    <property type="evidence" value="ECO:0000314"/>
    <property type="project" value="UniProtKB"/>
</dbReference>
<dbReference type="GO" id="GO:0005634">
    <property type="term" value="C:nucleus"/>
    <property type="evidence" value="ECO:0000314"/>
    <property type="project" value="UniProtKB"/>
</dbReference>
<dbReference type="GO" id="GO:0005667">
    <property type="term" value="C:transcription regulator complex"/>
    <property type="evidence" value="ECO:0000314"/>
    <property type="project" value="UniProtKB"/>
</dbReference>
<dbReference type="GO" id="GO:0003682">
    <property type="term" value="F:chromatin binding"/>
    <property type="evidence" value="ECO:0000266"/>
    <property type="project" value="RGD"/>
</dbReference>
<dbReference type="GO" id="GO:0003677">
    <property type="term" value="F:DNA binding"/>
    <property type="evidence" value="ECO:0000314"/>
    <property type="project" value="UniProtKB"/>
</dbReference>
<dbReference type="GO" id="GO:0001228">
    <property type="term" value="F:DNA-binding transcription activator activity, RNA polymerase II-specific"/>
    <property type="evidence" value="ECO:0000266"/>
    <property type="project" value="RGD"/>
</dbReference>
<dbReference type="GO" id="GO:0003700">
    <property type="term" value="F:DNA-binding transcription factor activity"/>
    <property type="evidence" value="ECO:0000304"/>
    <property type="project" value="RGD"/>
</dbReference>
<dbReference type="GO" id="GO:0000981">
    <property type="term" value="F:DNA-binding transcription factor activity, RNA polymerase II-specific"/>
    <property type="evidence" value="ECO:0000318"/>
    <property type="project" value="GO_Central"/>
</dbReference>
<dbReference type="GO" id="GO:0070888">
    <property type="term" value="F:E-box binding"/>
    <property type="evidence" value="ECO:0000266"/>
    <property type="project" value="RGD"/>
</dbReference>
<dbReference type="GO" id="GO:0046983">
    <property type="term" value="F:protein dimerization activity"/>
    <property type="evidence" value="ECO:0007669"/>
    <property type="project" value="InterPro"/>
</dbReference>
<dbReference type="GO" id="GO:0000978">
    <property type="term" value="F:RNA polymerase II cis-regulatory region sequence-specific DNA binding"/>
    <property type="evidence" value="ECO:0000314"/>
    <property type="project" value="MGI"/>
</dbReference>
<dbReference type="GO" id="GO:0000977">
    <property type="term" value="F:RNA polymerase II transcription regulatory region sequence-specific DNA binding"/>
    <property type="evidence" value="ECO:0000318"/>
    <property type="project" value="GO_Central"/>
</dbReference>
<dbReference type="GO" id="GO:0043565">
    <property type="term" value="F:sequence-specific DNA binding"/>
    <property type="evidence" value="ECO:0000266"/>
    <property type="project" value="RGD"/>
</dbReference>
<dbReference type="GO" id="GO:1990837">
    <property type="term" value="F:sequence-specific double-stranded DNA binding"/>
    <property type="evidence" value="ECO:0000266"/>
    <property type="project" value="RGD"/>
</dbReference>
<dbReference type="GO" id="GO:0035881">
    <property type="term" value="P:amacrine cell differentiation"/>
    <property type="evidence" value="ECO:0000250"/>
    <property type="project" value="UniProtKB"/>
</dbReference>
<dbReference type="GO" id="GO:0045165">
    <property type="term" value="P:cell fate commitment"/>
    <property type="evidence" value="ECO:0000266"/>
    <property type="project" value="RGD"/>
</dbReference>
<dbReference type="GO" id="GO:0021549">
    <property type="term" value="P:cerebellum development"/>
    <property type="evidence" value="ECO:0000250"/>
    <property type="project" value="UniProtKB"/>
</dbReference>
<dbReference type="GO" id="GO:0032502">
    <property type="term" value="P:developmental process"/>
    <property type="evidence" value="ECO:0000318"/>
    <property type="project" value="GO_Central"/>
</dbReference>
<dbReference type="GO" id="GO:0031017">
    <property type="term" value="P:exocrine pancreas development"/>
    <property type="evidence" value="ECO:0000314"/>
    <property type="project" value="UniProtKB"/>
</dbReference>
<dbReference type="GO" id="GO:0048699">
    <property type="term" value="P:generation of neurons"/>
    <property type="evidence" value="ECO:0000250"/>
    <property type="project" value="HGNC"/>
</dbReference>
<dbReference type="GO" id="GO:0030902">
    <property type="term" value="P:hindbrain development"/>
    <property type="evidence" value="ECO:0000250"/>
    <property type="project" value="HGNC"/>
</dbReference>
<dbReference type="GO" id="GO:0030182">
    <property type="term" value="P:neuron differentiation"/>
    <property type="evidence" value="ECO:0000266"/>
    <property type="project" value="RGD"/>
</dbReference>
<dbReference type="GO" id="GO:0048663">
    <property type="term" value="P:neuron fate commitment"/>
    <property type="evidence" value="ECO:0000266"/>
    <property type="project" value="RGD"/>
</dbReference>
<dbReference type="GO" id="GO:0031016">
    <property type="term" value="P:pancreas development"/>
    <property type="evidence" value="ECO:0000266"/>
    <property type="project" value="RGD"/>
</dbReference>
<dbReference type="GO" id="GO:0045893">
    <property type="term" value="P:positive regulation of DNA-templated transcription"/>
    <property type="evidence" value="ECO:0000250"/>
    <property type="project" value="HGNC"/>
</dbReference>
<dbReference type="GO" id="GO:0045944">
    <property type="term" value="P:positive regulation of transcription by RNA polymerase II"/>
    <property type="evidence" value="ECO:0000266"/>
    <property type="project" value="RGD"/>
</dbReference>
<dbReference type="GO" id="GO:0006355">
    <property type="term" value="P:regulation of DNA-templated transcription"/>
    <property type="evidence" value="ECO:0000314"/>
    <property type="project" value="UniProtKB"/>
</dbReference>
<dbReference type="GO" id="GO:0061074">
    <property type="term" value="P:regulation of neural retina development"/>
    <property type="evidence" value="ECO:0000250"/>
    <property type="project" value="UniProtKB"/>
</dbReference>
<dbReference type="GO" id="GO:0006357">
    <property type="term" value="P:regulation of transcription by RNA polymerase II"/>
    <property type="evidence" value="ECO:0000318"/>
    <property type="project" value="GO_Central"/>
</dbReference>
<dbReference type="GO" id="GO:0010842">
    <property type="term" value="P:retina layer formation"/>
    <property type="evidence" value="ECO:0000250"/>
    <property type="project" value="UniProtKB"/>
</dbReference>
<dbReference type="GO" id="GO:0060042">
    <property type="term" value="P:retina morphogenesis in camera-type eye"/>
    <property type="evidence" value="ECO:0000266"/>
    <property type="project" value="RGD"/>
</dbReference>
<dbReference type="GO" id="GO:0048384">
    <property type="term" value="P:retinoic acid receptor signaling pathway"/>
    <property type="evidence" value="ECO:0000250"/>
    <property type="project" value="HGNC"/>
</dbReference>
<dbReference type="GO" id="GO:0009888">
    <property type="term" value="P:tissue development"/>
    <property type="evidence" value="ECO:0000250"/>
    <property type="project" value="UniProtKB"/>
</dbReference>
<dbReference type="GO" id="GO:0006366">
    <property type="term" value="P:transcription by RNA polymerase II"/>
    <property type="evidence" value="ECO:0000266"/>
    <property type="project" value="RGD"/>
</dbReference>
<dbReference type="CDD" id="cd11417">
    <property type="entry name" value="bHLH_TS_PTF1A"/>
    <property type="match status" value="1"/>
</dbReference>
<dbReference type="FunFam" id="4.10.280.10:FF:000035">
    <property type="entry name" value="Pancreas-specific transcription factor 1a"/>
    <property type="match status" value="1"/>
</dbReference>
<dbReference type="Gene3D" id="4.10.280.10">
    <property type="entry name" value="Helix-loop-helix DNA-binding domain"/>
    <property type="match status" value="1"/>
</dbReference>
<dbReference type="InterPro" id="IPR011598">
    <property type="entry name" value="bHLH_dom"/>
</dbReference>
<dbReference type="InterPro" id="IPR050283">
    <property type="entry name" value="E-box_TF_Regulators"/>
</dbReference>
<dbReference type="InterPro" id="IPR036638">
    <property type="entry name" value="HLH_DNA-bd_sf"/>
</dbReference>
<dbReference type="PANTHER" id="PTHR23349">
    <property type="entry name" value="BASIC HELIX-LOOP-HELIX TRANSCRIPTION FACTOR, TWIST"/>
    <property type="match status" value="1"/>
</dbReference>
<dbReference type="PANTHER" id="PTHR23349:SF59">
    <property type="entry name" value="PANCREAS TRANSCRIPTION FACTOR 1 SUBUNIT ALPHA"/>
    <property type="match status" value="1"/>
</dbReference>
<dbReference type="Pfam" id="PF00010">
    <property type="entry name" value="HLH"/>
    <property type="match status" value="1"/>
</dbReference>
<dbReference type="SMART" id="SM00353">
    <property type="entry name" value="HLH"/>
    <property type="match status" value="1"/>
</dbReference>
<dbReference type="SUPFAM" id="SSF47459">
    <property type="entry name" value="HLH, helix-loop-helix DNA-binding domain"/>
    <property type="match status" value="1"/>
</dbReference>
<dbReference type="PROSITE" id="PS50888">
    <property type="entry name" value="BHLH"/>
    <property type="match status" value="1"/>
</dbReference>
<protein>
    <recommendedName>
        <fullName>Pancreas transcription factor 1 subunit alpha</fullName>
    </recommendedName>
    <alternativeName>
        <fullName>Pancreas-specific transcription factor 1a</fullName>
    </alternativeName>
    <alternativeName>
        <fullName>bHLH transcription factor p48</fullName>
    </alternativeName>
    <alternativeName>
        <fullName>p48 DNA-binding subunit of transcription factor PTF1</fullName>
        <shortName>PTF1-p48</shortName>
    </alternativeName>
</protein>
<sequence>MDAVLLEHFPGALDTFPSSYFDEEDFFTDQSSRDPLEDGDELLGDEQAEVEFLSHQLHEYCYRDGACLLLQPAPSAAPHALAPPPLGDPGEPEDSGSYCCDAGAPLGAFPYSPGSPPSCLAYPCTAVLSPGTRLRGLNGAAAAAAAAARRRRRVRSEAELQQLRQAANVRERRRMQSINDAFEGLRSHIPTLPYEKRLSKVDTLRLAIGYINFLSELVQADLPLRGSGTGGCGGPGGSRHLGGDSPGNQAQKVIICHRGTRSPSPSDPDYGLPPLAGHSLSWADEKQLKEQNIIRTAKVWTPEDPRKLNSKSFDNIENEPPFEFVS</sequence>
<name>PTF1A_RAT</name>
<feature type="chain" id="PRO_0000233145" description="Pancreas transcription factor 1 subunit alpha">
    <location>
        <begin position="1"/>
        <end position="326"/>
    </location>
</feature>
<feature type="domain" description="bHLH" evidence="2">
    <location>
        <begin position="162"/>
        <end position="214"/>
    </location>
</feature>
<feature type="region of interest" description="Disordered" evidence="3">
    <location>
        <begin position="229"/>
        <end position="249"/>
    </location>
</feature>
<feature type="region of interest" description="Disordered" evidence="3">
    <location>
        <begin position="304"/>
        <end position="326"/>
    </location>
</feature>
<feature type="compositionally biased region" description="Gly residues" evidence="3">
    <location>
        <begin position="229"/>
        <end position="240"/>
    </location>
</feature>
<proteinExistence type="evidence at protein level"/>
<reference key="1">
    <citation type="journal article" date="1996" name="EMBO J.">
        <title>The p48 DNA-binding subunit of transcription factor PTF1 is a new exocrine pancreas-specific basic helix-loop-helix protein.</title>
        <authorList>
            <person name="Krapp A."/>
            <person name="Knoefler M."/>
            <person name="Frutiger S."/>
            <person name="Hughes G.J."/>
            <person name="Hagenbuechle O."/>
            <person name="Wellauer P.K."/>
        </authorList>
    </citation>
    <scope>NUCLEOTIDE SEQUENCE [MRNA]</scope>
    <scope>PROTEIN SEQUENCE OF 2-18 AND 176-194</scope>
    <scope>FUNCTION</scope>
    <scope>SUBCELLULAR LOCATION</scope>
    <scope>DEVELOPMENTAL STAGE</scope>
    <source>
        <tissue>Pancreas</tissue>
    </source>
</reference>
<reference key="2">
    <citation type="journal article" date="1996" name="J. Biol. Chem.">
        <title>Constitutive expression of the gene for the cell-specific p48 DNA-binding subunit of pancreas transcription factor 1 in cultured cells is under control of binding sites for transcription factors SP1 and alpha CBF.</title>
        <authorList>
            <person name="Knoefler M."/>
            <person name="Krapp A."/>
            <person name="Hagenbuechle O."/>
            <person name="Wellauer P.K."/>
        </authorList>
    </citation>
    <scope>NUCLEOTIDE SEQUENCE [GENOMIC DNA]</scope>
    <scope>FUNCTION</scope>
    <source>
        <strain>Sprague-Dawley</strain>
    </source>
</reference>
<reference key="3">
    <citation type="journal article" date="2000" name="Cell Growth Differ.">
        <title>Role of the basic helix-loop-helix transcription factor p48 in the differentiation phenotype of exocrine pancreas cancer cells.</title>
        <authorList>
            <person name="Adell T."/>
            <person name="Gomez-Cuadrado A."/>
            <person name="Skoudy A."/>
            <person name="Pettengill O.S."/>
            <person name="Longnecker D.S."/>
            <person name="Real F.X."/>
        </authorList>
    </citation>
    <scope>FUNCTION IN PANCREAS DEVELOPMENT</scope>
    <scope>TISSUE SPECIFICITY</scope>
</reference>
<accession>Q64305</accession>
<keyword id="KW-0963">Cytoplasm</keyword>
<keyword id="KW-0217">Developmental protein</keyword>
<keyword id="KW-0221">Differentiation</keyword>
<keyword id="KW-0903">Direct protein sequencing</keyword>
<keyword id="KW-0238">DNA-binding</keyword>
<keyword id="KW-0524">Neurogenesis</keyword>
<keyword id="KW-0539">Nucleus</keyword>
<keyword id="KW-1185">Reference proteome</keyword>
<keyword id="KW-0804">Transcription</keyword>
<keyword id="KW-0805">Transcription regulation</keyword>